<gene>
    <name evidence="1" type="primary">atpD</name>
    <name type="ordered locus">SPG_1208</name>
</gene>
<feature type="chain" id="PRO_1000114483" description="V-type ATP synthase subunit D">
    <location>
        <begin position="1"/>
        <end position="203"/>
    </location>
</feature>
<proteinExistence type="inferred from homology"/>
<dbReference type="EMBL" id="CP001015">
    <property type="protein sequence ID" value="ACF56009.1"/>
    <property type="molecule type" value="Genomic_DNA"/>
</dbReference>
<dbReference type="SMR" id="B5E550"/>
<dbReference type="KEGG" id="spx:SPG_1208"/>
<dbReference type="HOGENOM" id="CLU_069688_2_1_9"/>
<dbReference type="GO" id="GO:0005524">
    <property type="term" value="F:ATP binding"/>
    <property type="evidence" value="ECO:0007669"/>
    <property type="project" value="UniProtKB-UniRule"/>
</dbReference>
<dbReference type="GO" id="GO:0046933">
    <property type="term" value="F:proton-transporting ATP synthase activity, rotational mechanism"/>
    <property type="evidence" value="ECO:0007669"/>
    <property type="project" value="UniProtKB-UniRule"/>
</dbReference>
<dbReference type="GO" id="GO:0046961">
    <property type="term" value="F:proton-transporting ATPase activity, rotational mechanism"/>
    <property type="evidence" value="ECO:0007669"/>
    <property type="project" value="InterPro"/>
</dbReference>
<dbReference type="GO" id="GO:0042777">
    <property type="term" value="P:proton motive force-driven plasma membrane ATP synthesis"/>
    <property type="evidence" value="ECO:0007669"/>
    <property type="project" value="UniProtKB-UniRule"/>
</dbReference>
<dbReference type="Gene3D" id="1.10.287.3240">
    <property type="match status" value="1"/>
</dbReference>
<dbReference type="HAMAP" id="MF_00271">
    <property type="entry name" value="ATP_synth_D_arch"/>
    <property type="match status" value="1"/>
</dbReference>
<dbReference type="InterPro" id="IPR002699">
    <property type="entry name" value="V_ATPase_D"/>
</dbReference>
<dbReference type="NCBIfam" id="NF001546">
    <property type="entry name" value="PRK00373.1-5"/>
    <property type="match status" value="1"/>
</dbReference>
<dbReference type="NCBIfam" id="TIGR00309">
    <property type="entry name" value="V_ATPase_subD"/>
    <property type="match status" value="1"/>
</dbReference>
<dbReference type="PANTHER" id="PTHR11671">
    <property type="entry name" value="V-TYPE ATP SYNTHASE SUBUNIT D"/>
    <property type="match status" value="1"/>
</dbReference>
<dbReference type="Pfam" id="PF01813">
    <property type="entry name" value="ATP-synt_D"/>
    <property type="match status" value="1"/>
</dbReference>
<comment type="function">
    <text evidence="1">Produces ATP from ADP in the presence of a proton gradient across the membrane.</text>
</comment>
<comment type="similarity">
    <text evidence="1">Belongs to the V-ATPase D subunit family.</text>
</comment>
<evidence type="ECO:0000255" key="1">
    <source>
        <dbReference type="HAMAP-Rule" id="MF_00271"/>
    </source>
</evidence>
<organism>
    <name type="scientific">Streptococcus pneumoniae serotype 19F (strain G54)</name>
    <dbReference type="NCBI Taxonomy" id="512566"/>
    <lineage>
        <taxon>Bacteria</taxon>
        <taxon>Bacillati</taxon>
        <taxon>Bacillota</taxon>
        <taxon>Bacilli</taxon>
        <taxon>Lactobacillales</taxon>
        <taxon>Streptococcaceae</taxon>
        <taxon>Streptococcus</taxon>
    </lineage>
</organism>
<name>VATD_STRP4</name>
<sequence length="203" mass="23918">MVRLNVKPTRMELNNLKERLTTAERGHKLLKDKRDELMRRFISLIRENNQLRKEVESYLIDNLKSFAVAKSLKNSQMVEELFSIPSKEIELFVEKENIMSVTVPRMHMNITSQNENSEYSYLSSNSEMDDVFATMNSLIYKLLRLAEVEKTCQLMADEIEKTRRRVNGLEYSIIPNLSETIHYIELKLEEAERANLVRIMKVK</sequence>
<reference key="1">
    <citation type="journal article" date="2001" name="Microb. Drug Resist.">
        <title>Annotated draft genomic sequence from a Streptococcus pneumoniae type 19F clinical isolate.</title>
        <authorList>
            <person name="Dopazo J."/>
            <person name="Mendoza A."/>
            <person name="Herrero J."/>
            <person name="Caldara F."/>
            <person name="Humbert Y."/>
            <person name="Friedli L."/>
            <person name="Guerrier M."/>
            <person name="Grand-Schenk E."/>
            <person name="Gandin C."/>
            <person name="de Francesco M."/>
            <person name="Polissi A."/>
            <person name="Buell G."/>
            <person name="Feger G."/>
            <person name="Garcia E."/>
            <person name="Peitsch M."/>
            <person name="Garcia-Bustos J.F."/>
        </authorList>
    </citation>
    <scope>NUCLEOTIDE SEQUENCE [LARGE SCALE GENOMIC DNA]</scope>
    <source>
        <strain>G54</strain>
    </source>
</reference>
<reference key="2">
    <citation type="submission" date="2008-03" db="EMBL/GenBank/DDBJ databases">
        <title>Pneumococcal beta glucoside metabolism investigated by whole genome comparison.</title>
        <authorList>
            <person name="Mulas L."/>
            <person name="Trappetti C."/>
            <person name="Hakenbeck R."/>
            <person name="Iannelli F."/>
            <person name="Pozzi G."/>
            <person name="Davidsen T.M."/>
            <person name="Tettelin H."/>
            <person name="Oggioni M."/>
        </authorList>
    </citation>
    <scope>NUCLEOTIDE SEQUENCE [LARGE SCALE GENOMIC DNA]</scope>
    <source>
        <strain>G54</strain>
    </source>
</reference>
<protein>
    <recommendedName>
        <fullName evidence="1">V-type ATP synthase subunit D</fullName>
    </recommendedName>
    <alternativeName>
        <fullName evidence="1">V-ATPase subunit D</fullName>
    </alternativeName>
</protein>
<keyword id="KW-0066">ATP synthesis</keyword>
<keyword id="KW-0375">Hydrogen ion transport</keyword>
<keyword id="KW-0406">Ion transport</keyword>
<keyword id="KW-0813">Transport</keyword>
<accession>B5E550</accession>